<proteinExistence type="inferred from homology"/>
<organism>
    <name type="scientific">Streptococcus mutans serotype c (strain ATCC 700610 / UA159)</name>
    <dbReference type="NCBI Taxonomy" id="210007"/>
    <lineage>
        <taxon>Bacteria</taxon>
        <taxon>Bacillati</taxon>
        <taxon>Bacillota</taxon>
        <taxon>Bacilli</taxon>
        <taxon>Lactobacillales</taxon>
        <taxon>Streptococcaceae</taxon>
        <taxon>Streptococcus</taxon>
    </lineage>
</organism>
<evidence type="ECO:0000255" key="1">
    <source>
        <dbReference type="HAMAP-Rule" id="MF_01037"/>
    </source>
</evidence>
<comment type="function">
    <text evidence="1">Catalyzes the folate-dependent formation of 5-methyl-uridine at position 54 (M-5-U54) in all tRNAs.</text>
</comment>
<comment type="catalytic activity">
    <reaction evidence="1">
        <text>uridine(54) in tRNA + (6R)-5,10-methylene-5,6,7,8-tetrahydrofolate + NADH + H(+) = 5-methyluridine(54) in tRNA + (6S)-5,6,7,8-tetrahydrofolate + NAD(+)</text>
        <dbReference type="Rhea" id="RHEA:16873"/>
        <dbReference type="Rhea" id="RHEA-COMP:10167"/>
        <dbReference type="Rhea" id="RHEA-COMP:10193"/>
        <dbReference type="ChEBI" id="CHEBI:15378"/>
        <dbReference type="ChEBI" id="CHEBI:15636"/>
        <dbReference type="ChEBI" id="CHEBI:57453"/>
        <dbReference type="ChEBI" id="CHEBI:57540"/>
        <dbReference type="ChEBI" id="CHEBI:57945"/>
        <dbReference type="ChEBI" id="CHEBI:65315"/>
        <dbReference type="ChEBI" id="CHEBI:74447"/>
        <dbReference type="EC" id="2.1.1.74"/>
    </reaction>
</comment>
<comment type="catalytic activity">
    <reaction evidence="1">
        <text>uridine(54) in tRNA + (6R)-5,10-methylene-5,6,7,8-tetrahydrofolate + NADPH + H(+) = 5-methyluridine(54) in tRNA + (6S)-5,6,7,8-tetrahydrofolate + NADP(+)</text>
        <dbReference type="Rhea" id="RHEA:62372"/>
        <dbReference type="Rhea" id="RHEA-COMP:10167"/>
        <dbReference type="Rhea" id="RHEA-COMP:10193"/>
        <dbReference type="ChEBI" id="CHEBI:15378"/>
        <dbReference type="ChEBI" id="CHEBI:15636"/>
        <dbReference type="ChEBI" id="CHEBI:57453"/>
        <dbReference type="ChEBI" id="CHEBI:57783"/>
        <dbReference type="ChEBI" id="CHEBI:58349"/>
        <dbReference type="ChEBI" id="CHEBI:65315"/>
        <dbReference type="ChEBI" id="CHEBI:74447"/>
        <dbReference type="EC" id="2.1.1.74"/>
    </reaction>
</comment>
<comment type="cofactor">
    <cofactor evidence="1">
        <name>FAD</name>
        <dbReference type="ChEBI" id="CHEBI:57692"/>
    </cofactor>
</comment>
<comment type="subcellular location">
    <subcellularLocation>
        <location evidence="1">Cytoplasm</location>
    </subcellularLocation>
</comment>
<comment type="similarity">
    <text evidence="1">Belongs to the MnmG family. TrmFO subfamily.</text>
</comment>
<keyword id="KW-0963">Cytoplasm</keyword>
<keyword id="KW-0274">FAD</keyword>
<keyword id="KW-0285">Flavoprotein</keyword>
<keyword id="KW-0489">Methyltransferase</keyword>
<keyword id="KW-0520">NAD</keyword>
<keyword id="KW-0521">NADP</keyword>
<keyword id="KW-1185">Reference proteome</keyword>
<keyword id="KW-0808">Transferase</keyword>
<keyword id="KW-0819">tRNA processing</keyword>
<feature type="chain" id="PRO_0000117271" description="Methylenetetrahydrofolate--tRNA-(uracil-5-)-methyltransferase TrmFO">
    <location>
        <begin position="1"/>
        <end position="444"/>
    </location>
</feature>
<feature type="binding site" evidence="1">
    <location>
        <begin position="10"/>
        <end position="15"/>
    </location>
    <ligand>
        <name>FAD</name>
        <dbReference type="ChEBI" id="CHEBI:57692"/>
    </ligand>
</feature>
<feature type="sequence variant" description="In strain: MT4239.">
    <original>Q</original>
    <variation>H</variation>
    <location>
        <position position="255"/>
    </location>
</feature>
<accession>P05428</accession>
<accession>Q9R306</accession>
<accession>Q9R7U1</accession>
<dbReference type="EC" id="2.1.1.74" evidence="1"/>
<dbReference type="EMBL" id="AE014133">
    <property type="protein sequence ID" value="AAN58704.1"/>
    <property type="molecule type" value="Genomic_DNA"/>
</dbReference>
<dbReference type="EMBL" id="D88651">
    <property type="protein sequence ID" value="BAA26100.1"/>
    <property type="molecule type" value="Genomic_DNA"/>
</dbReference>
<dbReference type="EMBL" id="D88654">
    <property type="protein sequence ID" value="BAA26104.1"/>
    <property type="molecule type" value="Genomic_DNA"/>
</dbReference>
<dbReference type="EMBL" id="D88657">
    <property type="protein sequence ID" value="BAA26108.1"/>
    <property type="molecule type" value="Genomic_DNA"/>
</dbReference>
<dbReference type="EMBL" id="D88660">
    <property type="protein sequence ID" value="BAA26112.1"/>
    <property type="molecule type" value="Genomic_DNA"/>
</dbReference>
<dbReference type="EMBL" id="D89977">
    <property type="protein sequence ID" value="BAA26118.1"/>
    <property type="molecule type" value="Genomic_DNA"/>
</dbReference>
<dbReference type="EMBL" id="M17361">
    <property type="protein sequence ID" value="AAA88587.1"/>
    <property type="molecule type" value="Genomic_DNA"/>
</dbReference>
<dbReference type="PIR" id="A33135">
    <property type="entry name" value="A33135"/>
</dbReference>
<dbReference type="RefSeq" id="NP_721398.1">
    <property type="nucleotide sequence ID" value="NC_004350.2"/>
</dbReference>
<dbReference type="RefSeq" id="WP_002262867.1">
    <property type="nucleotide sequence ID" value="NC_004350.2"/>
</dbReference>
<dbReference type="SMR" id="P05428"/>
<dbReference type="STRING" id="210007.SMU_1003"/>
<dbReference type="GeneID" id="93859487"/>
<dbReference type="KEGG" id="smu:SMU_1003"/>
<dbReference type="PATRIC" id="fig|210007.7.peg.896"/>
<dbReference type="eggNOG" id="COG1206">
    <property type="taxonomic scope" value="Bacteria"/>
</dbReference>
<dbReference type="HOGENOM" id="CLU_033057_1_0_9"/>
<dbReference type="OrthoDB" id="9803114at2"/>
<dbReference type="PhylomeDB" id="P05428"/>
<dbReference type="Proteomes" id="UP000002512">
    <property type="component" value="Chromosome"/>
</dbReference>
<dbReference type="GO" id="GO:0005829">
    <property type="term" value="C:cytosol"/>
    <property type="evidence" value="ECO:0007669"/>
    <property type="project" value="TreeGrafter"/>
</dbReference>
<dbReference type="GO" id="GO:0050660">
    <property type="term" value="F:flavin adenine dinucleotide binding"/>
    <property type="evidence" value="ECO:0007669"/>
    <property type="project" value="UniProtKB-UniRule"/>
</dbReference>
<dbReference type="GO" id="GO:0047151">
    <property type="term" value="F:tRNA (uracil(54)-C5)-methyltransferase activity, 5,10-methylenetetrahydrofolate-dependent"/>
    <property type="evidence" value="ECO:0007669"/>
    <property type="project" value="UniProtKB-UniRule"/>
</dbReference>
<dbReference type="GO" id="GO:0030488">
    <property type="term" value="P:tRNA methylation"/>
    <property type="evidence" value="ECO:0007669"/>
    <property type="project" value="TreeGrafter"/>
</dbReference>
<dbReference type="GO" id="GO:0002098">
    <property type="term" value="P:tRNA wobble uridine modification"/>
    <property type="evidence" value="ECO:0007669"/>
    <property type="project" value="TreeGrafter"/>
</dbReference>
<dbReference type="FunFam" id="3.50.50.60:FF:000035">
    <property type="entry name" value="Methylenetetrahydrofolate--tRNA-(uracil-5-)-methyltransferase TrmFO"/>
    <property type="match status" value="1"/>
</dbReference>
<dbReference type="FunFam" id="3.50.50.60:FF:000040">
    <property type="entry name" value="Methylenetetrahydrofolate--tRNA-(uracil-5-)-methyltransferase TrmFO"/>
    <property type="match status" value="1"/>
</dbReference>
<dbReference type="Gene3D" id="3.50.50.60">
    <property type="entry name" value="FAD/NAD(P)-binding domain"/>
    <property type="match status" value="2"/>
</dbReference>
<dbReference type="HAMAP" id="MF_01037">
    <property type="entry name" value="TrmFO"/>
    <property type="match status" value="1"/>
</dbReference>
<dbReference type="InterPro" id="IPR036188">
    <property type="entry name" value="FAD/NAD-bd_sf"/>
</dbReference>
<dbReference type="InterPro" id="IPR002218">
    <property type="entry name" value="MnmG-rel"/>
</dbReference>
<dbReference type="InterPro" id="IPR020595">
    <property type="entry name" value="MnmG-rel_CS"/>
</dbReference>
<dbReference type="InterPro" id="IPR040131">
    <property type="entry name" value="MnmG_N"/>
</dbReference>
<dbReference type="InterPro" id="IPR004417">
    <property type="entry name" value="TrmFO"/>
</dbReference>
<dbReference type="NCBIfam" id="TIGR00137">
    <property type="entry name" value="gid_trmFO"/>
    <property type="match status" value="1"/>
</dbReference>
<dbReference type="NCBIfam" id="NF003739">
    <property type="entry name" value="PRK05335.1"/>
    <property type="match status" value="1"/>
</dbReference>
<dbReference type="PANTHER" id="PTHR11806">
    <property type="entry name" value="GLUCOSE INHIBITED DIVISION PROTEIN A"/>
    <property type="match status" value="1"/>
</dbReference>
<dbReference type="PANTHER" id="PTHR11806:SF2">
    <property type="entry name" value="METHYLENETETRAHYDROFOLATE--TRNA-(URACIL-5-)-METHYLTRANSFERASE TRMFO"/>
    <property type="match status" value="1"/>
</dbReference>
<dbReference type="Pfam" id="PF01134">
    <property type="entry name" value="GIDA"/>
    <property type="match status" value="1"/>
</dbReference>
<dbReference type="SUPFAM" id="SSF51905">
    <property type="entry name" value="FAD/NAD(P)-binding domain"/>
    <property type="match status" value="1"/>
</dbReference>
<dbReference type="PROSITE" id="PS01281">
    <property type="entry name" value="GIDA_2"/>
    <property type="match status" value="1"/>
</dbReference>
<reference key="1">
    <citation type="journal article" date="2002" name="Proc. Natl. Acad. Sci. U.S.A.">
        <title>Genome sequence of Streptococcus mutans UA159, a cariogenic dental pathogen.</title>
        <authorList>
            <person name="Ajdic D.J."/>
            <person name="McShan W.M."/>
            <person name="McLaughlin R.E."/>
            <person name="Savic G."/>
            <person name="Chang J."/>
            <person name="Carson M.B."/>
            <person name="Primeaux C."/>
            <person name="Tian R."/>
            <person name="Kenton S."/>
            <person name="Jia H.G."/>
            <person name="Lin S.P."/>
            <person name="Qian Y."/>
            <person name="Li S."/>
            <person name="Zhu H."/>
            <person name="Najar F.Z."/>
            <person name="Lai H."/>
            <person name="White J."/>
            <person name="Roe B.A."/>
            <person name="Ferretti J.J."/>
        </authorList>
    </citation>
    <scope>NUCLEOTIDE SEQUENCE [LARGE SCALE GENOMIC DNA]</scope>
    <source>
        <strain>ATCC 700610 / UA159</strain>
    </source>
</reference>
<reference key="2">
    <citation type="journal article" date="1998" name="FEMS Microbiol. Lett.">
        <title>Molecular analyses of glucosyltransferase genes among strains of Streptococcus mutans.</title>
        <authorList>
            <person name="Fujiwara T."/>
            <person name="Terao Y."/>
            <person name="Hoshino T."/>
            <person name="Kawabata S."/>
            <person name="Ooshima T."/>
            <person name="Sobue S."/>
            <person name="Kimura S."/>
            <person name="Hamada S."/>
        </authorList>
    </citation>
    <scope>NUCLEOTIDE SEQUENCE [GENOMIC DNA] OF 228-444</scope>
    <source>
        <strain>MT4239 / Serotype c</strain>
        <strain>MT4245 / Serotype e</strain>
        <strain>MT4251 / Serotype f</strain>
        <strain>MT4467 / Serotype e</strain>
        <strain>MT8148 / Serotype c</strain>
    </source>
</reference>
<reference key="3">
    <citation type="journal article" date="1987" name="J. Bacteriol.">
        <title>Sequence analysis of the gtfB gene from Streptococcus mutans.</title>
        <authorList>
            <person name="Shiroza T."/>
            <person name="Ueda S."/>
            <person name="Kuramitsu H.K."/>
        </authorList>
    </citation>
    <scope>NUCLEOTIDE SEQUENCE [GENOMIC DNA] OF 359-444</scope>
    <source>
        <strain>GS-5</strain>
    </source>
</reference>
<sequence>MSQSYINVVGAGLAGSEAAYQIAKRGIPVKLYEMRGVKRTPQHKTSNFAELVCSNSFRGDSLTNAVGLLKEEMRRLDSIIMRTGEAHRVPAGGAMAVDRSGYAQAVTAELENNPLIQVIRNEVTEIPDDAITVIATGPLTSDSLAKKIYKLNGGEGFYFYDAAAPIVDQSSIDMDKVYLKSRYDKGEAAYLNCPMTKEEFIRFYEALINAEEAPFNSFEREKYFEGCMPIEVMAKRGIKTLLYGPMKPVGLEYPQDYKGPRDGDYKAPYAVVQLRQDNAAGSLYNIVGFQTHLKWSEQKRVFSMIPGLEQAHFVRYGVMHRNSYIDSPNLLAPTFATCKNPNLFFAGQMTGVEGYVESAASGLVAGINAVRRFKDEEAVIFPQTTAIGALPYYITHTKSKHFQPMNINFGIIKDLGGPRIRDKKKRYEKIAERSLKDLQQFLTV</sequence>
<gene>
    <name evidence="1" type="primary">trmFO</name>
    <name type="synonym">gid</name>
    <name type="ordered locus">SMU_1003</name>
</gene>
<protein>
    <recommendedName>
        <fullName evidence="1">Methylenetetrahydrofolate--tRNA-(uracil-5-)-methyltransferase TrmFO</fullName>
        <ecNumber evidence="1">2.1.1.74</ecNumber>
    </recommendedName>
    <alternativeName>
        <fullName evidence="1">Folate-dependent tRNA (uracil-5-)-methyltransferase</fullName>
    </alternativeName>
    <alternativeName>
        <fullName evidence="1">Folate-dependent tRNA(M-5-U54)-methyltransferase</fullName>
    </alternativeName>
</protein>
<name>TRMFO_STRMU</name>